<feature type="chain" id="PRO_1000072868" description="NADPH-dependent 7-cyano-7-deazaguanine reductase">
    <location>
        <begin position="1"/>
        <end position="279"/>
    </location>
</feature>
<feature type="active site" description="Thioimide intermediate" evidence="1">
    <location>
        <position position="187"/>
    </location>
</feature>
<feature type="active site" description="Proton donor" evidence="1">
    <location>
        <position position="194"/>
    </location>
</feature>
<feature type="binding site" evidence="1">
    <location>
        <begin position="86"/>
        <end position="88"/>
    </location>
    <ligand>
        <name>substrate</name>
    </ligand>
</feature>
<feature type="binding site" evidence="1">
    <location>
        <begin position="88"/>
        <end position="89"/>
    </location>
    <ligand>
        <name>NADPH</name>
        <dbReference type="ChEBI" id="CHEBI:57783"/>
    </ligand>
</feature>
<feature type="binding site" evidence="1">
    <location>
        <begin position="226"/>
        <end position="227"/>
    </location>
    <ligand>
        <name>substrate</name>
    </ligand>
</feature>
<feature type="binding site" evidence="1">
    <location>
        <begin position="255"/>
        <end position="256"/>
    </location>
    <ligand>
        <name>NADPH</name>
        <dbReference type="ChEBI" id="CHEBI:57783"/>
    </ligand>
</feature>
<comment type="function">
    <text evidence="1">Catalyzes the NADPH-dependent reduction of 7-cyano-7-deazaguanine (preQ0) to 7-aminomethyl-7-deazaguanine (preQ1).</text>
</comment>
<comment type="catalytic activity">
    <reaction evidence="1">
        <text>7-aminomethyl-7-carbaguanine + 2 NADP(+) = 7-cyano-7-deazaguanine + 2 NADPH + 3 H(+)</text>
        <dbReference type="Rhea" id="RHEA:13409"/>
        <dbReference type="ChEBI" id="CHEBI:15378"/>
        <dbReference type="ChEBI" id="CHEBI:45075"/>
        <dbReference type="ChEBI" id="CHEBI:57783"/>
        <dbReference type="ChEBI" id="CHEBI:58349"/>
        <dbReference type="ChEBI" id="CHEBI:58703"/>
        <dbReference type="EC" id="1.7.1.13"/>
    </reaction>
</comment>
<comment type="pathway">
    <text evidence="1">tRNA modification; tRNA-queuosine biosynthesis.</text>
</comment>
<comment type="subunit">
    <text evidence="1">Homodimer.</text>
</comment>
<comment type="subcellular location">
    <subcellularLocation>
        <location evidence="1">Cytoplasm</location>
    </subcellularLocation>
</comment>
<comment type="similarity">
    <text evidence="1">Belongs to the GTP cyclohydrolase I family. QueF type 2 subfamily.</text>
</comment>
<reference key="1">
    <citation type="journal article" date="2010" name="BMC Genomics">
        <title>A genomic perspective on the potential of Actinobacillus succinogenes for industrial succinate production.</title>
        <authorList>
            <person name="McKinlay J.B."/>
            <person name="Laivenieks M."/>
            <person name="Schindler B.D."/>
            <person name="McKinlay A.A."/>
            <person name="Siddaramappa S."/>
            <person name="Challacombe J.F."/>
            <person name="Lowry S.R."/>
            <person name="Clum A."/>
            <person name="Lapidus A.L."/>
            <person name="Burkhart K.B."/>
            <person name="Harkins V."/>
            <person name="Vieille C."/>
        </authorList>
    </citation>
    <scope>NUCLEOTIDE SEQUENCE [LARGE SCALE GENOMIC DNA]</scope>
    <source>
        <strain>ATCC 55618 / DSM 22257 / CCUG 43843 / 130Z</strain>
    </source>
</reference>
<accession>A6VNL8</accession>
<organism>
    <name type="scientific">Actinobacillus succinogenes (strain ATCC 55618 / DSM 22257 / CCUG 43843 / 130Z)</name>
    <dbReference type="NCBI Taxonomy" id="339671"/>
    <lineage>
        <taxon>Bacteria</taxon>
        <taxon>Pseudomonadati</taxon>
        <taxon>Pseudomonadota</taxon>
        <taxon>Gammaproteobacteria</taxon>
        <taxon>Pasteurellales</taxon>
        <taxon>Pasteurellaceae</taxon>
        <taxon>Actinobacillus</taxon>
    </lineage>
</organism>
<proteinExistence type="inferred from homology"/>
<keyword id="KW-0963">Cytoplasm</keyword>
<keyword id="KW-0521">NADP</keyword>
<keyword id="KW-0560">Oxidoreductase</keyword>
<keyword id="KW-0671">Queuosine biosynthesis</keyword>
<keyword id="KW-1185">Reference proteome</keyword>
<dbReference type="EC" id="1.7.1.13" evidence="1"/>
<dbReference type="EMBL" id="CP000746">
    <property type="protein sequence ID" value="ABR74565.1"/>
    <property type="molecule type" value="Genomic_DNA"/>
</dbReference>
<dbReference type="RefSeq" id="WP_012072942.1">
    <property type="nucleotide sequence ID" value="NC_009655.1"/>
</dbReference>
<dbReference type="SMR" id="A6VNL8"/>
<dbReference type="STRING" id="339671.Asuc_1201"/>
<dbReference type="KEGG" id="asu:Asuc_1201"/>
<dbReference type="eggNOG" id="COG0780">
    <property type="taxonomic scope" value="Bacteria"/>
</dbReference>
<dbReference type="eggNOG" id="COG2904">
    <property type="taxonomic scope" value="Bacteria"/>
</dbReference>
<dbReference type="HOGENOM" id="CLU_054738_0_0_6"/>
<dbReference type="OrthoDB" id="9789995at2"/>
<dbReference type="UniPathway" id="UPA00392"/>
<dbReference type="Proteomes" id="UP000001114">
    <property type="component" value="Chromosome"/>
</dbReference>
<dbReference type="GO" id="GO:0005737">
    <property type="term" value="C:cytoplasm"/>
    <property type="evidence" value="ECO:0007669"/>
    <property type="project" value="UniProtKB-SubCell"/>
</dbReference>
<dbReference type="GO" id="GO:0033739">
    <property type="term" value="F:preQ1 synthase activity"/>
    <property type="evidence" value="ECO:0007669"/>
    <property type="project" value="UniProtKB-UniRule"/>
</dbReference>
<dbReference type="GO" id="GO:0008616">
    <property type="term" value="P:queuosine biosynthetic process"/>
    <property type="evidence" value="ECO:0007669"/>
    <property type="project" value="UniProtKB-UniRule"/>
</dbReference>
<dbReference type="GO" id="GO:0006400">
    <property type="term" value="P:tRNA modification"/>
    <property type="evidence" value="ECO:0007669"/>
    <property type="project" value="UniProtKB-UniRule"/>
</dbReference>
<dbReference type="Gene3D" id="3.30.1130.10">
    <property type="match status" value="2"/>
</dbReference>
<dbReference type="HAMAP" id="MF_00817">
    <property type="entry name" value="QueF_type2"/>
    <property type="match status" value="1"/>
</dbReference>
<dbReference type="InterPro" id="IPR043133">
    <property type="entry name" value="GTP-CH-I_C/QueF"/>
</dbReference>
<dbReference type="InterPro" id="IPR050084">
    <property type="entry name" value="NADPH_dep_7-cyano-7-deazaG_red"/>
</dbReference>
<dbReference type="InterPro" id="IPR029500">
    <property type="entry name" value="QueF"/>
</dbReference>
<dbReference type="InterPro" id="IPR029139">
    <property type="entry name" value="QueF_N"/>
</dbReference>
<dbReference type="InterPro" id="IPR016428">
    <property type="entry name" value="QueF_type2"/>
</dbReference>
<dbReference type="NCBIfam" id="TIGR03138">
    <property type="entry name" value="QueF"/>
    <property type="match status" value="1"/>
</dbReference>
<dbReference type="PANTHER" id="PTHR34354">
    <property type="entry name" value="NADPH-DEPENDENT 7-CYANO-7-DEAZAGUANINE REDUCTASE"/>
    <property type="match status" value="1"/>
</dbReference>
<dbReference type="PANTHER" id="PTHR34354:SF1">
    <property type="entry name" value="NADPH-DEPENDENT 7-CYANO-7-DEAZAGUANINE REDUCTASE"/>
    <property type="match status" value="1"/>
</dbReference>
<dbReference type="Pfam" id="PF14489">
    <property type="entry name" value="QueF"/>
    <property type="match status" value="1"/>
</dbReference>
<dbReference type="Pfam" id="PF14819">
    <property type="entry name" value="QueF_N"/>
    <property type="match status" value="1"/>
</dbReference>
<dbReference type="PIRSF" id="PIRSF004750">
    <property type="entry name" value="Nitrile_oxidored_YqcD_prd"/>
    <property type="match status" value="1"/>
</dbReference>
<dbReference type="SUPFAM" id="SSF55620">
    <property type="entry name" value="Tetrahydrobiopterin biosynthesis enzymes-like"/>
    <property type="match status" value="1"/>
</dbReference>
<sequence>MNRYDNSLSGLKLGQKTEYNAKYDRTLLQPVPRRLNRDDLGISAQQPFNQGADIWTAYEISWLNPKGLPQIAIADAEIDFRSENLVESKSFKLYLNSFNQTKFASPAEVQDTIRRDLQDCVQGEVKVRLNSVAFYTHQPIHELSGEIIDNQDIEISDYGFNAELLTNCTCDVQVEETLVSHLLKSNCLITGQPDWGTLQIRYAGNRIDREKLLRYIVSFRQHNEFHEQCVERIFCDILHYAEPEKLTVYARYTRRGGLDINPFRSNFEPVPGNFRLARQ</sequence>
<gene>
    <name evidence="1" type="primary">queF</name>
    <name type="ordered locus">Asuc_1201</name>
</gene>
<protein>
    <recommendedName>
        <fullName evidence="1">NADPH-dependent 7-cyano-7-deazaguanine reductase</fullName>
        <ecNumber evidence="1">1.7.1.13</ecNumber>
    </recommendedName>
    <alternativeName>
        <fullName evidence="1">7-cyano-7-carbaguanine reductase</fullName>
    </alternativeName>
    <alternativeName>
        <fullName evidence="1">NADPH-dependent nitrile oxidoreductase</fullName>
    </alternativeName>
    <alternativeName>
        <fullName evidence="1">PreQ(0) reductase</fullName>
    </alternativeName>
</protein>
<evidence type="ECO:0000255" key="1">
    <source>
        <dbReference type="HAMAP-Rule" id="MF_00817"/>
    </source>
</evidence>
<name>QUEF_ACTSZ</name>